<proteinExistence type="evidence at transcript level"/>
<name>PSBL_CUSGR</name>
<accession>Q8LV29</accession>
<accession>A7M912</accession>
<organism>
    <name type="scientific">Cuscuta gronovii</name>
    <name type="common">Common dodder</name>
    <name type="synonym">Epithymum gronovii</name>
    <dbReference type="NCBI Taxonomy" id="35886"/>
    <lineage>
        <taxon>Eukaryota</taxon>
        <taxon>Viridiplantae</taxon>
        <taxon>Streptophyta</taxon>
        <taxon>Embryophyta</taxon>
        <taxon>Tracheophyta</taxon>
        <taxon>Spermatophyta</taxon>
        <taxon>Magnoliopsida</taxon>
        <taxon>eudicotyledons</taxon>
        <taxon>Gunneridae</taxon>
        <taxon>Pentapetalae</taxon>
        <taxon>asterids</taxon>
        <taxon>lamiids</taxon>
        <taxon>Solanales</taxon>
        <taxon>Convolvulaceae</taxon>
        <taxon>Cuscuteae</taxon>
        <taxon>Cuscuta</taxon>
        <taxon>Cuscuta subgen. Grammica</taxon>
        <taxon>Cuscuta sect. Oxycarpae</taxon>
    </lineage>
</organism>
<protein>
    <recommendedName>
        <fullName evidence="1">Photosystem II reaction center protein L</fullName>
        <shortName evidence="1">PSII-L</shortName>
    </recommendedName>
</protein>
<sequence length="39" mass="4612">MTQQSNPNEQTVELNRTSLYWGLLLIFVLAVLFSNYFFN</sequence>
<feature type="chain" id="PRO_0000219704" description="Photosystem II reaction center protein L">
    <location>
        <begin position="1"/>
        <end position="39"/>
    </location>
</feature>
<feature type="transmembrane region" description="Helical" evidence="1">
    <location>
        <begin position="18"/>
        <end position="38"/>
    </location>
</feature>
<geneLocation type="plastid"/>
<evidence type="ECO:0000255" key="1">
    <source>
        <dbReference type="HAMAP-Rule" id="MF_01317"/>
    </source>
</evidence>
<evidence type="ECO:0000269" key="2">
    <source>
    </source>
</evidence>
<evidence type="ECO:0000305" key="3"/>
<keyword id="KW-0472">Membrane</keyword>
<keyword id="KW-0602">Photosynthesis</keyword>
<keyword id="KW-0604">Photosystem II</keyword>
<keyword id="KW-0934">Plastid</keyword>
<keyword id="KW-0674">Reaction center</keyword>
<keyword id="KW-0691">RNA editing</keyword>
<keyword id="KW-0793">Thylakoid</keyword>
<keyword id="KW-0812">Transmembrane</keyword>
<keyword id="KW-1133">Transmembrane helix</keyword>
<gene>
    <name evidence="1" type="primary">psbL</name>
</gene>
<dbReference type="EMBL" id="AY100954">
    <property type="protein sequence ID" value="AAM53428.1"/>
    <property type="molecule type" value="Genomic_DNA"/>
</dbReference>
<dbReference type="EMBL" id="AM711639">
    <property type="protein sequence ID" value="CAM98340.2"/>
    <property type="molecule type" value="Genomic_DNA"/>
</dbReference>
<dbReference type="RefSeq" id="YP_001430054.1">
    <property type="nucleotide sequence ID" value="NC_009765.1"/>
</dbReference>
<dbReference type="SMR" id="Q8LV29"/>
<dbReference type="GeneID" id="5536793"/>
<dbReference type="GO" id="GO:0009539">
    <property type="term" value="C:photosystem II reaction center"/>
    <property type="evidence" value="ECO:0007669"/>
    <property type="project" value="InterPro"/>
</dbReference>
<dbReference type="GO" id="GO:0055035">
    <property type="term" value="C:plastid thylakoid membrane"/>
    <property type="evidence" value="ECO:0007669"/>
    <property type="project" value="UniProtKB-SubCell"/>
</dbReference>
<dbReference type="GO" id="GO:0015979">
    <property type="term" value="P:photosynthesis"/>
    <property type="evidence" value="ECO:0007669"/>
    <property type="project" value="UniProtKB-UniRule"/>
</dbReference>
<dbReference type="HAMAP" id="MF_01317">
    <property type="entry name" value="PSII_PsbL"/>
    <property type="match status" value="1"/>
</dbReference>
<dbReference type="InterPro" id="IPR003372">
    <property type="entry name" value="PSII_PsbL"/>
</dbReference>
<dbReference type="InterPro" id="IPR037266">
    <property type="entry name" value="PSII_PsbL_sf"/>
</dbReference>
<dbReference type="NCBIfam" id="NF001972">
    <property type="entry name" value="PRK00753.1"/>
    <property type="match status" value="1"/>
</dbReference>
<dbReference type="Pfam" id="PF02419">
    <property type="entry name" value="PsbL"/>
    <property type="match status" value="1"/>
</dbReference>
<dbReference type="SUPFAM" id="SSF161017">
    <property type="entry name" value="Photosystem II reaction center protein L, PsbL"/>
    <property type="match status" value="1"/>
</dbReference>
<reference key="1">
    <citation type="journal article" date="2002" name="Am. J. Bot.">
        <title>Monophyly of the Convolvulaceae and circumscription of their major lineages based on DNA sequences of multiple chloroplast loci.</title>
        <authorList>
            <person name="Stefanovic S."/>
            <person name="Krueger L."/>
            <person name="Olmstead R.G."/>
        </authorList>
        <dbReference type="AGRICOLA" id="IND23320510"/>
    </citation>
    <scope>NUCLEOTIDE SEQUENCE [GENOMIC DNA]</scope>
</reference>
<reference key="2">
    <citation type="journal article" date="2007" name="BMC Plant Biol.">
        <title>Complete DNA sequences of the plastid genomes of two parasitic flowering plant species, Cuscuta reflexa and Cuscuta gronovii.</title>
        <authorList>
            <person name="Funk H.T."/>
            <person name="Berg S."/>
            <person name="Krupinska K."/>
            <person name="Maier U.-G."/>
            <person name="Krause K."/>
        </authorList>
    </citation>
    <scope>NUCLEOTIDE SEQUENCE [LARGE SCALE GENOMIC DNA]</scope>
    <scope>RNA EDITING</scope>
</reference>
<comment type="function">
    <text evidence="1">One of the components of the core complex of photosystem II (PSII). PSII is a light-driven water:plastoquinone oxidoreductase that uses light energy to abstract electrons from H(2)O, generating O(2) and a proton gradient subsequently used for ATP formation. It consists of a core antenna complex that captures photons, and an electron transfer chain that converts photonic excitation into a charge separation. This subunit is found at the monomer-monomer interface and is required for correct PSII assembly and/or dimerization.</text>
</comment>
<comment type="subunit">
    <text evidence="1">PSII is composed of 1 copy each of membrane proteins PsbA, PsbB, PsbC, PsbD, PsbE, PsbF, PsbH, PsbI, PsbJ, PsbK, PsbL, PsbM, PsbT, PsbX, PsbY, PsbZ, Psb30/Ycf12, at least 3 peripheral proteins of the oxygen-evolving complex and a large number of cofactors. It forms dimeric complexes.</text>
</comment>
<comment type="subcellular location">
    <subcellularLocation>
        <location evidence="3">Plastid thylakoid membrane</location>
        <topology evidence="1">Single-pass membrane protein</topology>
    </subcellularLocation>
</comment>
<comment type="RNA editing">
    <location>
        <position position="1" evidence="2"/>
    </location>
    <text>The initiator methionine is created by RNA editing.</text>
</comment>
<comment type="similarity">
    <text evidence="1">Belongs to the PsbL family.</text>
</comment>
<comment type="caution">
    <text evidence="3">Young tissue from this organism is photosynthetic and contains some thylakoids, although the photosynthetic activity does not exceed the light compensation point.</text>
</comment>